<sequence length="878" mass="98170">MTASKSSSATASASDRPDRYDPIALEQRWQSQWQQDDLYATRSPEPGQNAFYALSMFPYPSGSLHMGHVRNYVITDVIARAQRMRGDSVLHPMGWDAFGLPAENAAIERQVDPGVWTDRNIEQMKAQLARLGLSIDWSREQATCHADYYRWTQWLFLELMDQGLAYQKDATVNWDPVDQTVLANEQVDSEGRSWRSGALVEQKNLRQWFLRITNYADALLDDLDLLKGWPERVRTMQANWIGRSIGAEIDFRVSDHDDAVITVFTTRADTLHGVSYVVLAPEHPLVATLTAEHQRESVAAFRDLVGELSADERTADDRPKRGVPIGATAVNPANGESIPIWIADYVLAGYGTGAVMGVPAHDERDFLFARTYELPVKRVIQAAGTSDHLSDGEAWTGPGILLNSGRFDGQSSEEARQEITAHGQELGWARPKRQYRLRDWLISRQRYWGCPIPVIHCDHCGAVPVPADQLPVTLPKDVDLQGKGGSPLASLQSWVNVKCPSCGRDARRETDTMDTFMCSSWYFLRFADPHNTERAFDADAVERWLPVQQYVGGIEHAILHLLYSRFFTKALRDRGLLNIREPFERLLTQGMVQGVTYRNPRTGRYVAPSEVSDENAPKDPVDGGELEVLFEKMSKSKYNGVDPAAVIDRYGADTARMFILFKAPPEKDLEWDDADVEGQFRFLQRLWRLIESVRSDDQDQLLGDPVDPPEGSGLSDKEGEIRRAVHTAIEAVSDDLKGDFQFNTAISELMKLSNTLSGALPEASRAVQAEAVSALIRLLAPFAPHLAEEFWFSLGGQDSVHKQPWPLHDPAALVRDTVDLVIQVKGKVRGTITVPADCSKETLEELALASDVAERWLEGKPPRRVIVVPGKLVNLVPS</sequence>
<evidence type="ECO:0000255" key="1">
    <source>
        <dbReference type="HAMAP-Rule" id="MF_00049"/>
    </source>
</evidence>
<evidence type="ECO:0000256" key="2">
    <source>
        <dbReference type="SAM" id="MobiDB-lite"/>
    </source>
</evidence>
<proteinExistence type="inferred from homology"/>
<gene>
    <name evidence="1" type="primary">leuS</name>
    <name type="ordered locus">SynWH7803_1260</name>
</gene>
<comment type="catalytic activity">
    <reaction evidence="1">
        <text>tRNA(Leu) + L-leucine + ATP = L-leucyl-tRNA(Leu) + AMP + diphosphate</text>
        <dbReference type="Rhea" id="RHEA:11688"/>
        <dbReference type="Rhea" id="RHEA-COMP:9613"/>
        <dbReference type="Rhea" id="RHEA-COMP:9622"/>
        <dbReference type="ChEBI" id="CHEBI:30616"/>
        <dbReference type="ChEBI" id="CHEBI:33019"/>
        <dbReference type="ChEBI" id="CHEBI:57427"/>
        <dbReference type="ChEBI" id="CHEBI:78442"/>
        <dbReference type="ChEBI" id="CHEBI:78494"/>
        <dbReference type="ChEBI" id="CHEBI:456215"/>
        <dbReference type="EC" id="6.1.1.4"/>
    </reaction>
</comment>
<comment type="subcellular location">
    <subcellularLocation>
        <location evidence="1">Cytoplasm</location>
    </subcellularLocation>
</comment>
<comment type="similarity">
    <text evidence="1">Belongs to the class-I aminoacyl-tRNA synthetase family.</text>
</comment>
<dbReference type="EC" id="6.1.1.4" evidence="1"/>
<dbReference type="EMBL" id="CT971583">
    <property type="protein sequence ID" value="CAK23686.1"/>
    <property type="molecule type" value="Genomic_DNA"/>
</dbReference>
<dbReference type="SMR" id="A5GL71"/>
<dbReference type="STRING" id="32051.SynWH7803_1260"/>
<dbReference type="KEGG" id="syx:SynWH7803_1260"/>
<dbReference type="eggNOG" id="COG0495">
    <property type="taxonomic scope" value="Bacteria"/>
</dbReference>
<dbReference type="HOGENOM" id="CLU_004427_0_0_3"/>
<dbReference type="OrthoDB" id="9810365at2"/>
<dbReference type="Proteomes" id="UP000001566">
    <property type="component" value="Chromosome"/>
</dbReference>
<dbReference type="GO" id="GO:0005829">
    <property type="term" value="C:cytosol"/>
    <property type="evidence" value="ECO:0007669"/>
    <property type="project" value="TreeGrafter"/>
</dbReference>
<dbReference type="GO" id="GO:0002161">
    <property type="term" value="F:aminoacyl-tRNA deacylase activity"/>
    <property type="evidence" value="ECO:0007669"/>
    <property type="project" value="InterPro"/>
</dbReference>
<dbReference type="GO" id="GO:0005524">
    <property type="term" value="F:ATP binding"/>
    <property type="evidence" value="ECO:0007669"/>
    <property type="project" value="UniProtKB-UniRule"/>
</dbReference>
<dbReference type="GO" id="GO:0004823">
    <property type="term" value="F:leucine-tRNA ligase activity"/>
    <property type="evidence" value="ECO:0007669"/>
    <property type="project" value="UniProtKB-UniRule"/>
</dbReference>
<dbReference type="GO" id="GO:0006429">
    <property type="term" value="P:leucyl-tRNA aminoacylation"/>
    <property type="evidence" value="ECO:0007669"/>
    <property type="project" value="UniProtKB-UniRule"/>
</dbReference>
<dbReference type="CDD" id="cd07958">
    <property type="entry name" value="Anticodon_Ia_Leu_BEm"/>
    <property type="match status" value="1"/>
</dbReference>
<dbReference type="CDD" id="cd00812">
    <property type="entry name" value="LeuRS_core"/>
    <property type="match status" value="1"/>
</dbReference>
<dbReference type="FunFam" id="3.40.50.620:FF:000003">
    <property type="entry name" value="Leucine--tRNA ligase"/>
    <property type="match status" value="1"/>
</dbReference>
<dbReference type="FunFam" id="1.10.730.10:FF:000011">
    <property type="entry name" value="Leucine--tRNA ligase chloroplastic/mitochondrial"/>
    <property type="match status" value="1"/>
</dbReference>
<dbReference type="FunFam" id="3.40.50.620:FF:000100">
    <property type="entry name" value="probable leucine--tRNA ligase, mitochondrial"/>
    <property type="match status" value="1"/>
</dbReference>
<dbReference type="Gene3D" id="3.40.50.620">
    <property type="entry name" value="HUPs"/>
    <property type="match status" value="2"/>
</dbReference>
<dbReference type="Gene3D" id="1.10.730.10">
    <property type="entry name" value="Isoleucyl-tRNA Synthetase, Domain 1"/>
    <property type="match status" value="1"/>
</dbReference>
<dbReference type="HAMAP" id="MF_00049_B">
    <property type="entry name" value="Leu_tRNA_synth_B"/>
    <property type="match status" value="1"/>
</dbReference>
<dbReference type="InterPro" id="IPR001412">
    <property type="entry name" value="aa-tRNA-synth_I_CS"/>
</dbReference>
<dbReference type="InterPro" id="IPR002300">
    <property type="entry name" value="aa-tRNA-synth_Ia"/>
</dbReference>
<dbReference type="InterPro" id="IPR002302">
    <property type="entry name" value="Leu-tRNA-ligase"/>
</dbReference>
<dbReference type="InterPro" id="IPR025709">
    <property type="entry name" value="Leu_tRNA-synth_edit"/>
</dbReference>
<dbReference type="InterPro" id="IPR013155">
    <property type="entry name" value="M/V/L/I-tRNA-synth_anticd-bd"/>
</dbReference>
<dbReference type="InterPro" id="IPR015413">
    <property type="entry name" value="Methionyl/Leucyl_tRNA_Synth"/>
</dbReference>
<dbReference type="InterPro" id="IPR014729">
    <property type="entry name" value="Rossmann-like_a/b/a_fold"/>
</dbReference>
<dbReference type="InterPro" id="IPR009080">
    <property type="entry name" value="tRNAsynth_Ia_anticodon-bd"/>
</dbReference>
<dbReference type="InterPro" id="IPR009008">
    <property type="entry name" value="Val/Leu/Ile-tRNA-synth_edit"/>
</dbReference>
<dbReference type="NCBIfam" id="TIGR00396">
    <property type="entry name" value="leuS_bact"/>
    <property type="match status" value="1"/>
</dbReference>
<dbReference type="PANTHER" id="PTHR43740:SF2">
    <property type="entry name" value="LEUCINE--TRNA LIGASE, MITOCHONDRIAL"/>
    <property type="match status" value="1"/>
</dbReference>
<dbReference type="PANTHER" id="PTHR43740">
    <property type="entry name" value="LEUCYL-TRNA SYNTHETASE"/>
    <property type="match status" value="1"/>
</dbReference>
<dbReference type="Pfam" id="PF08264">
    <property type="entry name" value="Anticodon_1"/>
    <property type="match status" value="1"/>
</dbReference>
<dbReference type="Pfam" id="PF00133">
    <property type="entry name" value="tRNA-synt_1"/>
    <property type="match status" value="2"/>
</dbReference>
<dbReference type="Pfam" id="PF13603">
    <property type="entry name" value="tRNA-synt_1_2"/>
    <property type="match status" value="1"/>
</dbReference>
<dbReference type="Pfam" id="PF09334">
    <property type="entry name" value="tRNA-synt_1g"/>
    <property type="match status" value="1"/>
</dbReference>
<dbReference type="PRINTS" id="PR00985">
    <property type="entry name" value="TRNASYNTHLEU"/>
</dbReference>
<dbReference type="SUPFAM" id="SSF47323">
    <property type="entry name" value="Anticodon-binding domain of a subclass of class I aminoacyl-tRNA synthetases"/>
    <property type="match status" value="1"/>
</dbReference>
<dbReference type="SUPFAM" id="SSF52374">
    <property type="entry name" value="Nucleotidylyl transferase"/>
    <property type="match status" value="1"/>
</dbReference>
<dbReference type="SUPFAM" id="SSF50677">
    <property type="entry name" value="ValRS/IleRS/LeuRS editing domain"/>
    <property type="match status" value="1"/>
</dbReference>
<dbReference type="PROSITE" id="PS00178">
    <property type="entry name" value="AA_TRNA_LIGASE_I"/>
    <property type="match status" value="1"/>
</dbReference>
<feature type="chain" id="PRO_0000334832" description="Leucine--tRNA ligase">
    <location>
        <begin position="1"/>
        <end position="878"/>
    </location>
</feature>
<feature type="region of interest" description="Disordered" evidence="2">
    <location>
        <begin position="1"/>
        <end position="23"/>
    </location>
</feature>
<feature type="short sequence motif" description="'HIGH' region">
    <location>
        <begin position="58"/>
        <end position="68"/>
    </location>
</feature>
<feature type="short sequence motif" description="'KMSKS' region">
    <location>
        <begin position="632"/>
        <end position="636"/>
    </location>
</feature>
<feature type="compositionally biased region" description="Low complexity" evidence="2">
    <location>
        <begin position="1"/>
        <end position="14"/>
    </location>
</feature>
<feature type="binding site" evidence="1">
    <location>
        <position position="635"/>
    </location>
    <ligand>
        <name>ATP</name>
        <dbReference type="ChEBI" id="CHEBI:30616"/>
    </ligand>
</feature>
<accession>A5GL71</accession>
<protein>
    <recommendedName>
        <fullName evidence="1">Leucine--tRNA ligase</fullName>
        <ecNumber evidence="1">6.1.1.4</ecNumber>
    </recommendedName>
    <alternativeName>
        <fullName evidence="1">Leucyl-tRNA synthetase</fullName>
        <shortName evidence="1">LeuRS</shortName>
    </alternativeName>
</protein>
<keyword id="KW-0030">Aminoacyl-tRNA synthetase</keyword>
<keyword id="KW-0067">ATP-binding</keyword>
<keyword id="KW-0963">Cytoplasm</keyword>
<keyword id="KW-0436">Ligase</keyword>
<keyword id="KW-0547">Nucleotide-binding</keyword>
<keyword id="KW-0648">Protein biosynthesis</keyword>
<keyword id="KW-1185">Reference proteome</keyword>
<organism>
    <name type="scientific">Synechococcus sp. (strain WH7803)</name>
    <dbReference type="NCBI Taxonomy" id="32051"/>
    <lineage>
        <taxon>Bacteria</taxon>
        <taxon>Bacillati</taxon>
        <taxon>Cyanobacteriota</taxon>
        <taxon>Cyanophyceae</taxon>
        <taxon>Synechococcales</taxon>
        <taxon>Synechococcaceae</taxon>
        <taxon>Synechococcus</taxon>
    </lineage>
</organism>
<name>SYL_SYNPW</name>
<reference key="1">
    <citation type="submission" date="2006-05" db="EMBL/GenBank/DDBJ databases">
        <authorList>
            <consortium name="Genoscope"/>
        </authorList>
    </citation>
    <scope>NUCLEOTIDE SEQUENCE [LARGE SCALE GENOMIC DNA]</scope>
    <source>
        <strain>WH7803</strain>
    </source>
</reference>